<gene>
    <name evidence="1" type="primary">carA</name>
    <name type="ordered locus">Desal_0978</name>
</gene>
<comment type="function">
    <text evidence="1">Small subunit of the glutamine-dependent carbamoyl phosphate synthetase (CPSase). CPSase catalyzes the formation of carbamoyl phosphate from the ammonia moiety of glutamine, carbonate, and phosphate donated by ATP, constituting the first step of 2 biosynthetic pathways, one leading to arginine and/or urea and the other to pyrimidine nucleotides. The small subunit (glutamine amidotransferase) binds and cleaves glutamine to supply the large subunit with the substrate ammonia.</text>
</comment>
<comment type="catalytic activity">
    <reaction evidence="1">
        <text>hydrogencarbonate + L-glutamine + 2 ATP + H2O = carbamoyl phosphate + L-glutamate + 2 ADP + phosphate + 2 H(+)</text>
        <dbReference type="Rhea" id="RHEA:18633"/>
        <dbReference type="ChEBI" id="CHEBI:15377"/>
        <dbReference type="ChEBI" id="CHEBI:15378"/>
        <dbReference type="ChEBI" id="CHEBI:17544"/>
        <dbReference type="ChEBI" id="CHEBI:29985"/>
        <dbReference type="ChEBI" id="CHEBI:30616"/>
        <dbReference type="ChEBI" id="CHEBI:43474"/>
        <dbReference type="ChEBI" id="CHEBI:58228"/>
        <dbReference type="ChEBI" id="CHEBI:58359"/>
        <dbReference type="ChEBI" id="CHEBI:456216"/>
        <dbReference type="EC" id="6.3.5.5"/>
    </reaction>
</comment>
<comment type="catalytic activity">
    <molecule>Carbamoyl phosphate synthase small chain</molecule>
    <reaction evidence="1">
        <text>L-glutamine + H2O = L-glutamate + NH4(+)</text>
        <dbReference type="Rhea" id="RHEA:15889"/>
        <dbReference type="ChEBI" id="CHEBI:15377"/>
        <dbReference type="ChEBI" id="CHEBI:28938"/>
        <dbReference type="ChEBI" id="CHEBI:29985"/>
        <dbReference type="ChEBI" id="CHEBI:58359"/>
    </reaction>
</comment>
<comment type="pathway">
    <text evidence="1">Amino-acid biosynthesis; L-arginine biosynthesis; carbamoyl phosphate from bicarbonate: step 1/1.</text>
</comment>
<comment type="pathway">
    <text evidence="1">Pyrimidine metabolism; UMP biosynthesis via de novo pathway; (S)-dihydroorotate from bicarbonate: step 1/3.</text>
</comment>
<comment type="subunit">
    <text evidence="1">Composed of two chains; the small (or glutamine) chain promotes the hydrolysis of glutamine to ammonia, which is used by the large (or ammonia) chain to synthesize carbamoyl phosphate. Tetramer of heterodimers (alpha,beta)4.</text>
</comment>
<comment type="similarity">
    <text evidence="1">Belongs to the CarA family.</text>
</comment>
<feature type="chain" id="PRO_1000213866" description="Carbamoyl phosphate synthase small chain">
    <location>
        <begin position="1"/>
        <end position="374"/>
    </location>
</feature>
<feature type="domain" description="Glutamine amidotransferase type-1" evidence="1">
    <location>
        <begin position="189"/>
        <end position="374"/>
    </location>
</feature>
<feature type="region of interest" description="CPSase" evidence="1">
    <location>
        <begin position="1"/>
        <end position="185"/>
    </location>
</feature>
<feature type="active site" description="Nucleophile" evidence="1">
    <location>
        <position position="264"/>
    </location>
</feature>
<feature type="active site" evidence="1">
    <location>
        <position position="347"/>
    </location>
</feature>
<feature type="active site" evidence="1">
    <location>
        <position position="349"/>
    </location>
</feature>
<feature type="binding site" evidence="1">
    <location>
        <position position="45"/>
    </location>
    <ligand>
        <name>L-glutamine</name>
        <dbReference type="ChEBI" id="CHEBI:58359"/>
    </ligand>
</feature>
<feature type="binding site" evidence="1">
    <location>
        <position position="237"/>
    </location>
    <ligand>
        <name>L-glutamine</name>
        <dbReference type="ChEBI" id="CHEBI:58359"/>
    </ligand>
</feature>
<feature type="binding site" evidence="1">
    <location>
        <position position="239"/>
    </location>
    <ligand>
        <name>L-glutamine</name>
        <dbReference type="ChEBI" id="CHEBI:58359"/>
    </ligand>
</feature>
<feature type="binding site" evidence="1">
    <location>
        <position position="265"/>
    </location>
    <ligand>
        <name>L-glutamine</name>
        <dbReference type="ChEBI" id="CHEBI:58359"/>
    </ligand>
</feature>
<feature type="binding site" evidence="1">
    <location>
        <position position="268"/>
    </location>
    <ligand>
        <name>L-glutamine</name>
        <dbReference type="ChEBI" id="CHEBI:58359"/>
    </ligand>
</feature>
<feature type="binding site" evidence="1">
    <location>
        <position position="306"/>
    </location>
    <ligand>
        <name>L-glutamine</name>
        <dbReference type="ChEBI" id="CHEBI:58359"/>
    </ligand>
</feature>
<feature type="binding site" evidence="1">
    <location>
        <position position="308"/>
    </location>
    <ligand>
        <name>L-glutamine</name>
        <dbReference type="ChEBI" id="CHEBI:58359"/>
    </ligand>
</feature>
<feature type="binding site" evidence="1">
    <location>
        <position position="309"/>
    </location>
    <ligand>
        <name>L-glutamine</name>
        <dbReference type="ChEBI" id="CHEBI:58359"/>
    </ligand>
</feature>
<dbReference type="EC" id="6.3.5.5" evidence="1"/>
<dbReference type="EMBL" id="CP001649">
    <property type="protein sequence ID" value="ACS79043.1"/>
    <property type="molecule type" value="Genomic_DNA"/>
</dbReference>
<dbReference type="RefSeq" id="WP_015850862.1">
    <property type="nucleotide sequence ID" value="NC_012881.1"/>
</dbReference>
<dbReference type="SMR" id="C6C0A9"/>
<dbReference type="STRING" id="526222.Desal_0978"/>
<dbReference type="KEGG" id="dsa:Desal_0978"/>
<dbReference type="eggNOG" id="COG0505">
    <property type="taxonomic scope" value="Bacteria"/>
</dbReference>
<dbReference type="HOGENOM" id="CLU_035901_2_1_7"/>
<dbReference type="OrthoDB" id="9804328at2"/>
<dbReference type="UniPathway" id="UPA00068">
    <property type="reaction ID" value="UER00171"/>
</dbReference>
<dbReference type="UniPathway" id="UPA00070">
    <property type="reaction ID" value="UER00115"/>
</dbReference>
<dbReference type="Proteomes" id="UP000002601">
    <property type="component" value="Chromosome"/>
</dbReference>
<dbReference type="GO" id="GO:0005524">
    <property type="term" value="F:ATP binding"/>
    <property type="evidence" value="ECO:0007669"/>
    <property type="project" value="UniProtKB-UniRule"/>
</dbReference>
<dbReference type="GO" id="GO:0004088">
    <property type="term" value="F:carbamoyl-phosphate synthase (glutamine-hydrolyzing) activity"/>
    <property type="evidence" value="ECO:0007669"/>
    <property type="project" value="UniProtKB-UniRule"/>
</dbReference>
<dbReference type="GO" id="GO:0004359">
    <property type="term" value="F:glutaminase activity"/>
    <property type="evidence" value="ECO:0007669"/>
    <property type="project" value="RHEA"/>
</dbReference>
<dbReference type="GO" id="GO:0006207">
    <property type="term" value="P:'de novo' pyrimidine nucleobase biosynthetic process"/>
    <property type="evidence" value="ECO:0007669"/>
    <property type="project" value="InterPro"/>
</dbReference>
<dbReference type="GO" id="GO:0044205">
    <property type="term" value="P:'de novo' UMP biosynthetic process"/>
    <property type="evidence" value="ECO:0007669"/>
    <property type="project" value="UniProtKB-UniRule"/>
</dbReference>
<dbReference type="GO" id="GO:0006541">
    <property type="term" value="P:glutamine metabolic process"/>
    <property type="evidence" value="ECO:0007669"/>
    <property type="project" value="InterPro"/>
</dbReference>
<dbReference type="GO" id="GO:0006526">
    <property type="term" value="P:L-arginine biosynthetic process"/>
    <property type="evidence" value="ECO:0007669"/>
    <property type="project" value="UniProtKB-UniRule"/>
</dbReference>
<dbReference type="CDD" id="cd01744">
    <property type="entry name" value="GATase1_CPSase"/>
    <property type="match status" value="1"/>
</dbReference>
<dbReference type="FunFam" id="3.50.30.20:FF:000001">
    <property type="entry name" value="Carbamoyl-phosphate synthase small chain"/>
    <property type="match status" value="1"/>
</dbReference>
<dbReference type="Gene3D" id="3.40.50.880">
    <property type="match status" value="1"/>
</dbReference>
<dbReference type="Gene3D" id="3.50.30.20">
    <property type="entry name" value="Carbamoyl-phosphate synthase small subunit, N-terminal domain"/>
    <property type="match status" value="1"/>
</dbReference>
<dbReference type="HAMAP" id="MF_01209">
    <property type="entry name" value="CPSase_S_chain"/>
    <property type="match status" value="1"/>
</dbReference>
<dbReference type="InterPro" id="IPR050472">
    <property type="entry name" value="Anth_synth/Amidotransfase"/>
</dbReference>
<dbReference type="InterPro" id="IPR006274">
    <property type="entry name" value="CarbamoylP_synth_ssu"/>
</dbReference>
<dbReference type="InterPro" id="IPR002474">
    <property type="entry name" value="CarbamoylP_synth_ssu_N"/>
</dbReference>
<dbReference type="InterPro" id="IPR036480">
    <property type="entry name" value="CarbP_synth_ssu_N_sf"/>
</dbReference>
<dbReference type="InterPro" id="IPR029062">
    <property type="entry name" value="Class_I_gatase-like"/>
</dbReference>
<dbReference type="InterPro" id="IPR035686">
    <property type="entry name" value="CPSase_GATase1"/>
</dbReference>
<dbReference type="InterPro" id="IPR017926">
    <property type="entry name" value="GATASE"/>
</dbReference>
<dbReference type="NCBIfam" id="TIGR01368">
    <property type="entry name" value="CPSaseIIsmall"/>
    <property type="match status" value="1"/>
</dbReference>
<dbReference type="NCBIfam" id="NF009475">
    <property type="entry name" value="PRK12838.1"/>
    <property type="match status" value="1"/>
</dbReference>
<dbReference type="PANTHER" id="PTHR43418:SF7">
    <property type="entry name" value="CARBAMOYL-PHOSPHATE SYNTHASE SMALL CHAIN"/>
    <property type="match status" value="1"/>
</dbReference>
<dbReference type="PANTHER" id="PTHR43418">
    <property type="entry name" value="MULTIFUNCTIONAL TRYPTOPHAN BIOSYNTHESIS PROTEIN-RELATED"/>
    <property type="match status" value="1"/>
</dbReference>
<dbReference type="Pfam" id="PF00988">
    <property type="entry name" value="CPSase_sm_chain"/>
    <property type="match status" value="1"/>
</dbReference>
<dbReference type="Pfam" id="PF00117">
    <property type="entry name" value="GATase"/>
    <property type="match status" value="1"/>
</dbReference>
<dbReference type="PRINTS" id="PR00097">
    <property type="entry name" value="ANTSNTHASEII"/>
</dbReference>
<dbReference type="PRINTS" id="PR00099">
    <property type="entry name" value="CPSGATASE"/>
</dbReference>
<dbReference type="PRINTS" id="PR00096">
    <property type="entry name" value="GATASE"/>
</dbReference>
<dbReference type="SMART" id="SM01097">
    <property type="entry name" value="CPSase_sm_chain"/>
    <property type="match status" value="1"/>
</dbReference>
<dbReference type="SUPFAM" id="SSF52021">
    <property type="entry name" value="Carbamoyl phosphate synthetase, small subunit N-terminal domain"/>
    <property type="match status" value="1"/>
</dbReference>
<dbReference type="SUPFAM" id="SSF52317">
    <property type="entry name" value="Class I glutamine amidotransferase-like"/>
    <property type="match status" value="1"/>
</dbReference>
<dbReference type="PROSITE" id="PS51273">
    <property type="entry name" value="GATASE_TYPE_1"/>
    <property type="match status" value="1"/>
</dbReference>
<proteinExistence type="inferred from homology"/>
<accession>C6C0A9</accession>
<organism>
    <name type="scientific">Maridesulfovibrio salexigens (strain ATCC 14822 / DSM 2638 / NCIMB 8403 / VKM B-1763)</name>
    <name type="common">Desulfovibrio salexigens</name>
    <dbReference type="NCBI Taxonomy" id="526222"/>
    <lineage>
        <taxon>Bacteria</taxon>
        <taxon>Pseudomonadati</taxon>
        <taxon>Thermodesulfobacteriota</taxon>
        <taxon>Desulfovibrionia</taxon>
        <taxon>Desulfovibrionales</taxon>
        <taxon>Desulfovibrionaceae</taxon>
        <taxon>Maridesulfovibrio</taxon>
    </lineage>
</organism>
<reference key="1">
    <citation type="submission" date="2009-06" db="EMBL/GenBank/DDBJ databases">
        <title>Complete sequence of Desulfovibrio salexigens DSM 2638.</title>
        <authorList>
            <consortium name="US DOE Joint Genome Institute"/>
            <person name="Lucas S."/>
            <person name="Copeland A."/>
            <person name="Lapidus A."/>
            <person name="Glavina del Rio T."/>
            <person name="Tice H."/>
            <person name="Bruce D."/>
            <person name="Goodwin L."/>
            <person name="Pitluck S."/>
            <person name="Munk A.C."/>
            <person name="Brettin T."/>
            <person name="Detter J.C."/>
            <person name="Han C."/>
            <person name="Tapia R."/>
            <person name="Larimer F."/>
            <person name="Land M."/>
            <person name="Hauser L."/>
            <person name="Kyrpides N."/>
            <person name="Anderson I."/>
            <person name="Wall J.D."/>
            <person name="Arkin A.P."/>
            <person name="Dehal P."/>
            <person name="Chivian D."/>
            <person name="Giles B."/>
            <person name="Hazen T.C."/>
        </authorList>
    </citation>
    <scope>NUCLEOTIDE SEQUENCE [LARGE SCALE GENOMIC DNA]</scope>
    <source>
        <strain>ATCC 14822 / DSM 2638 / NCIMB 8403 / VKM B-1763</strain>
    </source>
</reference>
<sequence length="374" mass="40988">MKAILALEDGTYFEGTSFTGPGESGGEAIFNTGMTGYQEVLTDPSYTGQMVCMTYPLIGNYGITKEDIESAKVHVAAFIVKECCKHPSNWRSVMSLPEYLKEAGVMGIEGIDTRALTRHLRINGAMRGIISTEELDPEKLVAKAKQLPTMEGQNLADTVTSETCYAWQDGKPVPVDVSSGYKWSDKGPRLVLVDYGVKWNILRLLDEQGFEVLSVPSHYSEEQVRALEPDAIFLSNGPGDPAVLDQAVKNAKSYCEDLPVAGICLGHQILGQALGGKAFKLKFGHHGCNHPVMDMESKKIEISSQNHGFCVDISDCSDLKITHKNLNDETLEGFAHKTKPIIAIQFHPEAAPGPHDSCYFFARFRNLVKDATGK</sequence>
<protein>
    <recommendedName>
        <fullName evidence="1">Carbamoyl phosphate synthase small chain</fullName>
        <ecNumber evidence="1">6.3.5.5</ecNumber>
    </recommendedName>
    <alternativeName>
        <fullName evidence="1">Carbamoyl phosphate synthetase glutamine chain</fullName>
    </alternativeName>
</protein>
<evidence type="ECO:0000255" key="1">
    <source>
        <dbReference type="HAMAP-Rule" id="MF_01209"/>
    </source>
</evidence>
<name>CARA_MARSD</name>
<keyword id="KW-0028">Amino-acid biosynthesis</keyword>
<keyword id="KW-0055">Arginine biosynthesis</keyword>
<keyword id="KW-0067">ATP-binding</keyword>
<keyword id="KW-0315">Glutamine amidotransferase</keyword>
<keyword id="KW-0436">Ligase</keyword>
<keyword id="KW-0547">Nucleotide-binding</keyword>
<keyword id="KW-0665">Pyrimidine biosynthesis</keyword>
<keyword id="KW-1185">Reference proteome</keyword>